<organism>
    <name type="scientific">Escherichia coli O45:K1 (strain S88 / ExPEC)</name>
    <dbReference type="NCBI Taxonomy" id="585035"/>
    <lineage>
        <taxon>Bacteria</taxon>
        <taxon>Pseudomonadati</taxon>
        <taxon>Pseudomonadota</taxon>
        <taxon>Gammaproteobacteria</taxon>
        <taxon>Enterobacterales</taxon>
        <taxon>Enterobacteriaceae</taxon>
        <taxon>Escherichia</taxon>
    </lineage>
</organism>
<protein>
    <recommendedName>
        <fullName evidence="1">Cysteine desulfurase IscS</fullName>
        <ecNumber evidence="1">2.8.1.7</ecNumber>
    </recommendedName>
</protein>
<proteinExistence type="inferred from homology"/>
<comment type="function">
    <text evidence="1">Master enzyme that delivers sulfur to a number of partners involved in Fe-S cluster assembly, tRNA modification or cofactor biosynthesis. Catalyzes the removal of elemental sulfur and selenium atoms from cysteine and selenocysteine to produce alanine. Functions as a sulfur delivery protein for Fe-S cluster synthesis onto IscU, an Fe-S scaffold assembly protein, as well as other S acceptor proteins. Also functions as a selenium delivery protein in the pathway for the biosynthesis of selenophosphate.</text>
</comment>
<comment type="catalytic activity">
    <reaction evidence="1">
        <text>(sulfur carrier)-H + L-cysteine = (sulfur carrier)-SH + L-alanine</text>
        <dbReference type="Rhea" id="RHEA:43892"/>
        <dbReference type="Rhea" id="RHEA-COMP:14737"/>
        <dbReference type="Rhea" id="RHEA-COMP:14739"/>
        <dbReference type="ChEBI" id="CHEBI:29917"/>
        <dbReference type="ChEBI" id="CHEBI:35235"/>
        <dbReference type="ChEBI" id="CHEBI:57972"/>
        <dbReference type="ChEBI" id="CHEBI:64428"/>
        <dbReference type="EC" id="2.8.1.7"/>
    </reaction>
</comment>
<comment type="cofactor">
    <cofactor evidence="1">
        <name>pyridoxal 5'-phosphate</name>
        <dbReference type="ChEBI" id="CHEBI:597326"/>
    </cofactor>
</comment>
<comment type="pathway">
    <text evidence="1">Cofactor biosynthesis; iron-sulfur cluster biosynthesis.</text>
</comment>
<comment type="subunit">
    <text evidence="1">Homodimer. Forms a heterotetramer with IscU, interacts with other sulfur acceptors.</text>
</comment>
<comment type="subcellular location">
    <subcellularLocation>
        <location evidence="1">Cytoplasm</location>
    </subcellularLocation>
</comment>
<comment type="similarity">
    <text evidence="1">Belongs to the class-V pyridoxal-phosphate-dependent aminotransferase family. NifS/IscS subfamily.</text>
</comment>
<gene>
    <name evidence="1" type="primary">iscS</name>
    <name type="ordered locus">ECS88_2706</name>
</gene>
<keyword id="KW-0001">2Fe-2S</keyword>
<keyword id="KW-0963">Cytoplasm</keyword>
<keyword id="KW-0408">Iron</keyword>
<keyword id="KW-0411">Iron-sulfur</keyword>
<keyword id="KW-0479">Metal-binding</keyword>
<keyword id="KW-0663">Pyridoxal phosphate</keyword>
<keyword id="KW-1185">Reference proteome</keyword>
<keyword id="KW-0808">Transferase</keyword>
<dbReference type="EC" id="2.8.1.7" evidence="1"/>
<dbReference type="EMBL" id="CU928161">
    <property type="protein sequence ID" value="CAR03972.1"/>
    <property type="molecule type" value="Genomic_DNA"/>
</dbReference>
<dbReference type="RefSeq" id="WP_001295373.1">
    <property type="nucleotide sequence ID" value="NC_011742.1"/>
</dbReference>
<dbReference type="SMR" id="B7MIM0"/>
<dbReference type="GeneID" id="93774606"/>
<dbReference type="KEGG" id="ecz:ECS88_2706"/>
<dbReference type="HOGENOM" id="CLU_003433_0_2_6"/>
<dbReference type="UniPathway" id="UPA00266"/>
<dbReference type="Proteomes" id="UP000000747">
    <property type="component" value="Chromosome"/>
</dbReference>
<dbReference type="GO" id="GO:1990221">
    <property type="term" value="C:L-cysteine desulfurase complex"/>
    <property type="evidence" value="ECO:0007669"/>
    <property type="project" value="UniProtKB-ARBA"/>
</dbReference>
<dbReference type="GO" id="GO:0051537">
    <property type="term" value="F:2 iron, 2 sulfur cluster binding"/>
    <property type="evidence" value="ECO:0007669"/>
    <property type="project" value="UniProtKB-UniRule"/>
</dbReference>
<dbReference type="GO" id="GO:0031071">
    <property type="term" value="F:cysteine desulfurase activity"/>
    <property type="evidence" value="ECO:0007669"/>
    <property type="project" value="UniProtKB-UniRule"/>
</dbReference>
<dbReference type="GO" id="GO:0046872">
    <property type="term" value="F:metal ion binding"/>
    <property type="evidence" value="ECO:0007669"/>
    <property type="project" value="UniProtKB-KW"/>
</dbReference>
<dbReference type="GO" id="GO:0030170">
    <property type="term" value="F:pyridoxal phosphate binding"/>
    <property type="evidence" value="ECO:0007669"/>
    <property type="project" value="UniProtKB-UniRule"/>
</dbReference>
<dbReference type="GO" id="GO:0044571">
    <property type="term" value="P:[2Fe-2S] cluster assembly"/>
    <property type="evidence" value="ECO:0007669"/>
    <property type="project" value="UniProtKB-UniRule"/>
</dbReference>
<dbReference type="FunFam" id="3.40.640.10:FF:000003">
    <property type="entry name" value="Cysteine desulfurase IscS"/>
    <property type="match status" value="1"/>
</dbReference>
<dbReference type="FunFam" id="3.90.1150.10:FF:000002">
    <property type="entry name" value="Cysteine desulfurase IscS"/>
    <property type="match status" value="1"/>
</dbReference>
<dbReference type="Gene3D" id="3.90.1150.10">
    <property type="entry name" value="Aspartate Aminotransferase, domain 1"/>
    <property type="match status" value="1"/>
</dbReference>
<dbReference type="Gene3D" id="3.40.640.10">
    <property type="entry name" value="Type I PLP-dependent aspartate aminotransferase-like (Major domain)"/>
    <property type="match status" value="1"/>
</dbReference>
<dbReference type="HAMAP" id="MF_00331">
    <property type="entry name" value="Cys_desulf_IscS"/>
    <property type="match status" value="1"/>
</dbReference>
<dbReference type="InterPro" id="IPR000192">
    <property type="entry name" value="Aminotrans_V_dom"/>
</dbReference>
<dbReference type="InterPro" id="IPR020578">
    <property type="entry name" value="Aminotrans_V_PyrdxlP_BS"/>
</dbReference>
<dbReference type="InterPro" id="IPR010240">
    <property type="entry name" value="Cys_deSase_IscS"/>
</dbReference>
<dbReference type="InterPro" id="IPR016454">
    <property type="entry name" value="Cysteine_dSase"/>
</dbReference>
<dbReference type="InterPro" id="IPR015424">
    <property type="entry name" value="PyrdxlP-dep_Trfase"/>
</dbReference>
<dbReference type="InterPro" id="IPR015421">
    <property type="entry name" value="PyrdxlP-dep_Trfase_major"/>
</dbReference>
<dbReference type="InterPro" id="IPR015422">
    <property type="entry name" value="PyrdxlP-dep_Trfase_small"/>
</dbReference>
<dbReference type="NCBIfam" id="TIGR02006">
    <property type="entry name" value="IscS"/>
    <property type="match status" value="1"/>
</dbReference>
<dbReference type="NCBIfam" id="NF002806">
    <property type="entry name" value="PRK02948.1"/>
    <property type="match status" value="1"/>
</dbReference>
<dbReference type="NCBIfam" id="NF010611">
    <property type="entry name" value="PRK14012.1"/>
    <property type="match status" value="1"/>
</dbReference>
<dbReference type="PANTHER" id="PTHR11601:SF34">
    <property type="entry name" value="CYSTEINE DESULFURASE"/>
    <property type="match status" value="1"/>
</dbReference>
<dbReference type="PANTHER" id="PTHR11601">
    <property type="entry name" value="CYSTEINE DESULFURYLASE FAMILY MEMBER"/>
    <property type="match status" value="1"/>
</dbReference>
<dbReference type="Pfam" id="PF00266">
    <property type="entry name" value="Aminotran_5"/>
    <property type="match status" value="1"/>
</dbReference>
<dbReference type="PIRSF" id="PIRSF005572">
    <property type="entry name" value="NifS"/>
    <property type="match status" value="1"/>
</dbReference>
<dbReference type="SUPFAM" id="SSF53383">
    <property type="entry name" value="PLP-dependent transferases"/>
    <property type="match status" value="1"/>
</dbReference>
<dbReference type="PROSITE" id="PS00595">
    <property type="entry name" value="AA_TRANSFER_CLASS_5"/>
    <property type="match status" value="1"/>
</dbReference>
<feature type="chain" id="PRO_1000119621" description="Cysteine desulfurase IscS">
    <location>
        <begin position="1"/>
        <end position="404"/>
    </location>
</feature>
<feature type="active site" description="Cysteine persulfide intermediate" evidence="1">
    <location>
        <position position="328"/>
    </location>
</feature>
<feature type="binding site" evidence="1">
    <location>
        <begin position="75"/>
        <end position="76"/>
    </location>
    <ligand>
        <name>pyridoxal 5'-phosphate</name>
        <dbReference type="ChEBI" id="CHEBI:597326"/>
    </ligand>
</feature>
<feature type="binding site" evidence="1">
    <location>
        <position position="155"/>
    </location>
    <ligand>
        <name>pyridoxal 5'-phosphate</name>
        <dbReference type="ChEBI" id="CHEBI:597326"/>
    </ligand>
</feature>
<feature type="binding site" evidence="1">
    <location>
        <position position="183"/>
    </location>
    <ligand>
        <name>pyridoxal 5'-phosphate</name>
        <dbReference type="ChEBI" id="CHEBI:597326"/>
    </ligand>
</feature>
<feature type="binding site" evidence="1">
    <location>
        <begin position="203"/>
        <end position="205"/>
    </location>
    <ligand>
        <name>pyridoxal 5'-phosphate</name>
        <dbReference type="ChEBI" id="CHEBI:597326"/>
    </ligand>
</feature>
<feature type="binding site" evidence="1">
    <location>
        <position position="243"/>
    </location>
    <ligand>
        <name>pyridoxal 5'-phosphate</name>
        <dbReference type="ChEBI" id="CHEBI:597326"/>
    </ligand>
</feature>
<feature type="binding site" description="via persulfide group" evidence="1">
    <location>
        <position position="328"/>
    </location>
    <ligand>
        <name>[2Fe-2S] cluster</name>
        <dbReference type="ChEBI" id="CHEBI:190135"/>
        <note>ligand shared with IscU</note>
    </ligand>
</feature>
<feature type="modified residue" description="N6-(pyridoxal phosphate)lysine" evidence="1">
    <location>
        <position position="206"/>
    </location>
</feature>
<sequence>MKLPIYLDYSATTPVDPRVAEKMMQFMTMDGTFGNPASRSHRFGWQAEEAVDIARNQIADLVGADPREIVFTSGATESDNLAIKGAANFYQKKGKHIITSKTEHKAVLDTCRQLEREGFEVTYLAPQRNGIIDLKELEAAMRDDTILVSIMHVNNEIGVVQDIAAIGEMCRARGIIYHVDATQSVGKLPIDLSQLKVDLMSFSGHKIYGPKGIGALYVRRKPRVRIEAQMHGGGHERGMRSGTLPVHQIVGMGEAYRIAKEEMATEMERLRGLRNRLWNGIKDIEEVYLNGDLEHGAPNILNVSFNYVEGESLIMALKDLAVSSGSACTSASLEPSYVLRALGLNDELAHSSIRFSLGRFTTEEEIDYTIELVRKSIGRLRDLSPLWEMYKQGVDLNSIEWAHH</sequence>
<accession>B7MIM0</accession>
<evidence type="ECO:0000255" key="1">
    <source>
        <dbReference type="HAMAP-Rule" id="MF_00331"/>
    </source>
</evidence>
<name>ISCS_ECO45</name>
<reference key="1">
    <citation type="journal article" date="2009" name="PLoS Genet.">
        <title>Organised genome dynamics in the Escherichia coli species results in highly diverse adaptive paths.</title>
        <authorList>
            <person name="Touchon M."/>
            <person name="Hoede C."/>
            <person name="Tenaillon O."/>
            <person name="Barbe V."/>
            <person name="Baeriswyl S."/>
            <person name="Bidet P."/>
            <person name="Bingen E."/>
            <person name="Bonacorsi S."/>
            <person name="Bouchier C."/>
            <person name="Bouvet O."/>
            <person name="Calteau A."/>
            <person name="Chiapello H."/>
            <person name="Clermont O."/>
            <person name="Cruveiller S."/>
            <person name="Danchin A."/>
            <person name="Diard M."/>
            <person name="Dossat C."/>
            <person name="Karoui M.E."/>
            <person name="Frapy E."/>
            <person name="Garry L."/>
            <person name="Ghigo J.M."/>
            <person name="Gilles A.M."/>
            <person name="Johnson J."/>
            <person name="Le Bouguenec C."/>
            <person name="Lescat M."/>
            <person name="Mangenot S."/>
            <person name="Martinez-Jehanne V."/>
            <person name="Matic I."/>
            <person name="Nassif X."/>
            <person name="Oztas S."/>
            <person name="Petit M.A."/>
            <person name="Pichon C."/>
            <person name="Rouy Z."/>
            <person name="Ruf C.S."/>
            <person name="Schneider D."/>
            <person name="Tourret J."/>
            <person name="Vacherie B."/>
            <person name="Vallenet D."/>
            <person name="Medigue C."/>
            <person name="Rocha E.P.C."/>
            <person name="Denamur E."/>
        </authorList>
    </citation>
    <scope>NUCLEOTIDE SEQUENCE [LARGE SCALE GENOMIC DNA]</scope>
    <source>
        <strain>S88 / ExPEC</strain>
    </source>
</reference>